<accession>A8M758</accession>
<sequence>MTESNLGAQSRTATIDNGAFGTRVITFSTGRLARQAAGSVVAQLGETVVLSATTVGRQPKEQFDFFPLTVDVEERMYAAGRIPGSFFRREGRPSEDAILTCRLIDRPLRPSFVKGLRNEVQVVETVLALDPSHPYDVVAINAASMSTKLSGLPFSGPIGATRMAHIDGSWVAFPTHEELERATFDMVVAGRALPDGDVAIMMVEAEATEHTVKLVAGGASAPTEEVVASGLEAAKPAIRELCRAQSELAEVAAKPVAEFPVFLDYSDDAYQAVADLARSDVAEALKIAGKADREEALDRIKARVIEDLGPRFEGREKELSAALRSLTKSEVRSRVLREQVRIDGRGPRDIRPLTAEVGVLPRVHGSALFERGETQILGVTTLNMLRMEQSLDTLSPEKSKRYMHNYNFPPYSTGETGRVGSPKRREIGHGALAERALIPVLPSREEFPYAIRQVSEALGSNGSTSMGSVCASTLGLLSAGVPLKAPVAGIAMGLISDEVEGKTRYVTLTDILGAEDAFGDMDFKVAGTQEFVTALQLDTKLDGIPSDVLAAALQQAYEARQTILEVMQAAIEAPATMSDYAPRVTTVKIPVDKIGMVIGPKGQTINAIQDETGAEISIEDDGTIYVGATNGPSAQAAVERVNAIANPTLPKVGDRFLGTVVKTAAFGAFVSLLPGRDGLLHISKVGDGKRVEKVEDYLNVGDKVEVEIADIDQRGKIYLDKVRPEGAEGPAEAAATDRPAGRDRGDRAPRDRGDRGDRERGSRGPDRGDGGEGGGESRPRRRTRHS</sequence>
<keyword id="KW-0963">Cytoplasm</keyword>
<keyword id="KW-0460">Magnesium</keyword>
<keyword id="KW-0479">Metal-binding</keyword>
<keyword id="KW-0548">Nucleotidyltransferase</keyword>
<keyword id="KW-0694">RNA-binding</keyword>
<keyword id="KW-0808">Transferase</keyword>
<proteinExistence type="inferred from homology"/>
<protein>
    <recommendedName>
        <fullName evidence="1">Polyribonucleotide nucleotidyltransferase</fullName>
        <ecNumber evidence="1">2.7.7.8</ecNumber>
    </recommendedName>
    <alternativeName>
        <fullName evidence="1">Polynucleotide phosphorylase</fullName>
        <shortName evidence="1">PNPase</shortName>
    </alternativeName>
</protein>
<gene>
    <name evidence="1" type="primary">pnp</name>
    <name type="ordered locus">Sare_1339</name>
</gene>
<feature type="chain" id="PRO_0000329827" description="Polyribonucleotide nucleotidyltransferase">
    <location>
        <begin position="1"/>
        <end position="786"/>
    </location>
</feature>
<feature type="domain" description="KH" evidence="1">
    <location>
        <begin position="582"/>
        <end position="641"/>
    </location>
</feature>
<feature type="domain" description="S1 motif" evidence="1">
    <location>
        <begin position="653"/>
        <end position="722"/>
    </location>
</feature>
<feature type="region of interest" description="Disordered" evidence="2">
    <location>
        <begin position="722"/>
        <end position="786"/>
    </location>
</feature>
<feature type="compositionally biased region" description="Low complexity" evidence="2">
    <location>
        <begin position="727"/>
        <end position="738"/>
    </location>
</feature>
<feature type="compositionally biased region" description="Basic and acidic residues" evidence="2">
    <location>
        <begin position="739"/>
        <end position="778"/>
    </location>
</feature>
<feature type="binding site" evidence="1">
    <location>
        <position position="516"/>
    </location>
    <ligand>
        <name>Mg(2+)</name>
        <dbReference type="ChEBI" id="CHEBI:18420"/>
    </ligand>
</feature>
<feature type="binding site" evidence="1">
    <location>
        <position position="522"/>
    </location>
    <ligand>
        <name>Mg(2+)</name>
        <dbReference type="ChEBI" id="CHEBI:18420"/>
    </ligand>
</feature>
<dbReference type="EC" id="2.7.7.8" evidence="1"/>
<dbReference type="EMBL" id="CP000850">
    <property type="protein sequence ID" value="ABV97240.1"/>
    <property type="molecule type" value="Genomic_DNA"/>
</dbReference>
<dbReference type="SMR" id="A8M758"/>
<dbReference type="STRING" id="391037.Sare_1339"/>
<dbReference type="KEGG" id="saq:Sare_1339"/>
<dbReference type="PATRIC" id="fig|391037.6.peg.1361"/>
<dbReference type="eggNOG" id="COG1185">
    <property type="taxonomic scope" value="Bacteria"/>
</dbReference>
<dbReference type="HOGENOM" id="CLU_004217_2_2_11"/>
<dbReference type="OrthoDB" id="9804305at2"/>
<dbReference type="GO" id="GO:0005829">
    <property type="term" value="C:cytosol"/>
    <property type="evidence" value="ECO:0007669"/>
    <property type="project" value="TreeGrafter"/>
</dbReference>
<dbReference type="GO" id="GO:0000175">
    <property type="term" value="F:3'-5'-RNA exonuclease activity"/>
    <property type="evidence" value="ECO:0007669"/>
    <property type="project" value="TreeGrafter"/>
</dbReference>
<dbReference type="GO" id="GO:0000287">
    <property type="term" value="F:magnesium ion binding"/>
    <property type="evidence" value="ECO:0007669"/>
    <property type="project" value="UniProtKB-UniRule"/>
</dbReference>
<dbReference type="GO" id="GO:0004654">
    <property type="term" value="F:polyribonucleotide nucleotidyltransferase activity"/>
    <property type="evidence" value="ECO:0007669"/>
    <property type="project" value="UniProtKB-UniRule"/>
</dbReference>
<dbReference type="GO" id="GO:0003723">
    <property type="term" value="F:RNA binding"/>
    <property type="evidence" value="ECO:0007669"/>
    <property type="project" value="UniProtKB-UniRule"/>
</dbReference>
<dbReference type="GO" id="GO:0006402">
    <property type="term" value="P:mRNA catabolic process"/>
    <property type="evidence" value="ECO:0007669"/>
    <property type="project" value="UniProtKB-UniRule"/>
</dbReference>
<dbReference type="GO" id="GO:0006396">
    <property type="term" value="P:RNA processing"/>
    <property type="evidence" value="ECO:0007669"/>
    <property type="project" value="InterPro"/>
</dbReference>
<dbReference type="CDD" id="cd02393">
    <property type="entry name" value="KH-I_PNPase"/>
    <property type="match status" value="1"/>
</dbReference>
<dbReference type="CDD" id="cd11364">
    <property type="entry name" value="RNase_PH_PNPase_2"/>
    <property type="match status" value="1"/>
</dbReference>
<dbReference type="CDD" id="cd04472">
    <property type="entry name" value="S1_PNPase"/>
    <property type="match status" value="1"/>
</dbReference>
<dbReference type="FunFam" id="2.40.50.140:FF:000069">
    <property type="entry name" value="Polyribonucleotide nucleotidyltransferase"/>
    <property type="match status" value="1"/>
</dbReference>
<dbReference type="FunFam" id="3.30.1370.10:FF:000001">
    <property type="entry name" value="Polyribonucleotide nucleotidyltransferase"/>
    <property type="match status" value="1"/>
</dbReference>
<dbReference type="FunFam" id="3.30.230.70:FF:000001">
    <property type="entry name" value="Polyribonucleotide nucleotidyltransferase"/>
    <property type="match status" value="1"/>
</dbReference>
<dbReference type="FunFam" id="3.30.230.70:FF:000002">
    <property type="entry name" value="Polyribonucleotide nucleotidyltransferase"/>
    <property type="match status" value="1"/>
</dbReference>
<dbReference type="Gene3D" id="3.30.230.70">
    <property type="entry name" value="GHMP Kinase, N-terminal domain"/>
    <property type="match status" value="2"/>
</dbReference>
<dbReference type="Gene3D" id="3.30.1370.10">
    <property type="entry name" value="K Homology domain, type 1"/>
    <property type="match status" value="1"/>
</dbReference>
<dbReference type="Gene3D" id="2.40.50.140">
    <property type="entry name" value="Nucleic acid-binding proteins"/>
    <property type="match status" value="1"/>
</dbReference>
<dbReference type="HAMAP" id="MF_01595">
    <property type="entry name" value="PNPase"/>
    <property type="match status" value="1"/>
</dbReference>
<dbReference type="InterPro" id="IPR001247">
    <property type="entry name" value="ExoRNase_PH_dom1"/>
</dbReference>
<dbReference type="InterPro" id="IPR036345">
    <property type="entry name" value="ExoRNase_PH_dom2_sf"/>
</dbReference>
<dbReference type="InterPro" id="IPR014069">
    <property type="entry name" value="GPSI/PNP"/>
</dbReference>
<dbReference type="InterPro" id="IPR004087">
    <property type="entry name" value="KH_dom"/>
</dbReference>
<dbReference type="InterPro" id="IPR004088">
    <property type="entry name" value="KH_dom_type_1"/>
</dbReference>
<dbReference type="InterPro" id="IPR036612">
    <property type="entry name" value="KH_dom_type_1_sf"/>
</dbReference>
<dbReference type="InterPro" id="IPR012340">
    <property type="entry name" value="NA-bd_OB-fold"/>
</dbReference>
<dbReference type="InterPro" id="IPR012162">
    <property type="entry name" value="PNPase"/>
</dbReference>
<dbReference type="InterPro" id="IPR027408">
    <property type="entry name" value="PNPase/RNase_PH_dom_sf"/>
</dbReference>
<dbReference type="InterPro" id="IPR015848">
    <property type="entry name" value="PNPase_PH_RNA-bd_bac/org-type"/>
</dbReference>
<dbReference type="InterPro" id="IPR036456">
    <property type="entry name" value="PNPase_PH_RNA-bd_sf"/>
</dbReference>
<dbReference type="InterPro" id="IPR020568">
    <property type="entry name" value="Ribosomal_Su5_D2-typ_SF"/>
</dbReference>
<dbReference type="InterPro" id="IPR003029">
    <property type="entry name" value="S1_domain"/>
</dbReference>
<dbReference type="NCBIfam" id="TIGR03591">
    <property type="entry name" value="polynuc_phos"/>
    <property type="match status" value="1"/>
</dbReference>
<dbReference type="NCBIfam" id="TIGR02696">
    <property type="entry name" value="pppGpp_PNP"/>
    <property type="match status" value="1"/>
</dbReference>
<dbReference type="NCBIfam" id="NF008805">
    <property type="entry name" value="PRK11824.1"/>
    <property type="match status" value="1"/>
</dbReference>
<dbReference type="PANTHER" id="PTHR11252">
    <property type="entry name" value="POLYRIBONUCLEOTIDE NUCLEOTIDYLTRANSFERASE"/>
    <property type="match status" value="1"/>
</dbReference>
<dbReference type="PANTHER" id="PTHR11252:SF0">
    <property type="entry name" value="POLYRIBONUCLEOTIDE NUCLEOTIDYLTRANSFERASE 1, MITOCHONDRIAL"/>
    <property type="match status" value="1"/>
</dbReference>
<dbReference type="Pfam" id="PF00013">
    <property type="entry name" value="KH_1"/>
    <property type="match status" value="1"/>
</dbReference>
<dbReference type="Pfam" id="PF03726">
    <property type="entry name" value="PNPase"/>
    <property type="match status" value="1"/>
</dbReference>
<dbReference type="Pfam" id="PF01138">
    <property type="entry name" value="RNase_PH"/>
    <property type="match status" value="2"/>
</dbReference>
<dbReference type="Pfam" id="PF00575">
    <property type="entry name" value="S1"/>
    <property type="match status" value="1"/>
</dbReference>
<dbReference type="PIRSF" id="PIRSF005499">
    <property type="entry name" value="PNPase"/>
    <property type="match status" value="1"/>
</dbReference>
<dbReference type="SMART" id="SM00322">
    <property type="entry name" value="KH"/>
    <property type="match status" value="1"/>
</dbReference>
<dbReference type="SMART" id="SM00316">
    <property type="entry name" value="S1"/>
    <property type="match status" value="1"/>
</dbReference>
<dbReference type="SUPFAM" id="SSF54791">
    <property type="entry name" value="Eukaryotic type KH-domain (KH-domain type I)"/>
    <property type="match status" value="1"/>
</dbReference>
<dbReference type="SUPFAM" id="SSF50249">
    <property type="entry name" value="Nucleic acid-binding proteins"/>
    <property type="match status" value="1"/>
</dbReference>
<dbReference type="SUPFAM" id="SSF46915">
    <property type="entry name" value="Polynucleotide phosphorylase/guanosine pentaphosphate synthase (PNPase/GPSI), domain 3"/>
    <property type="match status" value="1"/>
</dbReference>
<dbReference type="SUPFAM" id="SSF55666">
    <property type="entry name" value="Ribonuclease PH domain 2-like"/>
    <property type="match status" value="2"/>
</dbReference>
<dbReference type="SUPFAM" id="SSF54211">
    <property type="entry name" value="Ribosomal protein S5 domain 2-like"/>
    <property type="match status" value="2"/>
</dbReference>
<dbReference type="PROSITE" id="PS50084">
    <property type="entry name" value="KH_TYPE_1"/>
    <property type="match status" value="1"/>
</dbReference>
<dbReference type="PROSITE" id="PS50126">
    <property type="entry name" value="S1"/>
    <property type="match status" value="1"/>
</dbReference>
<evidence type="ECO:0000255" key="1">
    <source>
        <dbReference type="HAMAP-Rule" id="MF_01595"/>
    </source>
</evidence>
<evidence type="ECO:0000256" key="2">
    <source>
        <dbReference type="SAM" id="MobiDB-lite"/>
    </source>
</evidence>
<organism>
    <name type="scientific">Salinispora arenicola (strain CNS-205)</name>
    <dbReference type="NCBI Taxonomy" id="391037"/>
    <lineage>
        <taxon>Bacteria</taxon>
        <taxon>Bacillati</taxon>
        <taxon>Actinomycetota</taxon>
        <taxon>Actinomycetes</taxon>
        <taxon>Micromonosporales</taxon>
        <taxon>Micromonosporaceae</taxon>
        <taxon>Salinispora</taxon>
    </lineage>
</organism>
<name>PNP_SALAI</name>
<reference key="1">
    <citation type="submission" date="2007-10" db="EMBL/GenBank/DDBJ databases">
        <title>Complete sequence of Salinispora arenicola CNS-205.</title>
        <authorList>
            <consortium name="US DOE Joint Genome Institute"/>
            <person name="Copeland A."/>
            <person name="Lucas S."/>
            <person name="Lapidus A."/>
            <person name="Barry K."/>
            <person name="Glavina del Rio T."/>
            <person name="Dalin E."/>
            <person name="Tice H."/>
            <person name="Pitluck S."/>
            <person name="Foster B."/>
            <person name="Schmutz J."/>
            <person name="Larimer F."/>
            <person name="Land M."/>
            <person name="Hauser L."/>
            <person name="Kyrpides N."/>
            <person name="Ivanova N."/>
            <person name="Jensen P.R."/>
            <person name="Moore B.S."/>
            <person name="Penn K."/>
            <person name="Jenkins C."/>
            <person name="Udwary D."/>
            <person name="Xiang L."/>
            <person name="Gontang E."/>
            <person name="Richardson P."/>
        </authorList>
    </citation>
    <scope>NUCLEOTIDE SEQUENCE [LARGE SCALE GENOMIC DNA]</scope>
    <source>
        <strain>CNS-205</strain>
    </source>
</reference>
<comment type="function">
    <text evidence="1">Involved in mRNA degradation. Catalyzes the phosphorolysis of single-stranded polyribonucleotides processively in the 3'- to 5'-direction.</text>
</comment>
<comment type="catalytic activity">
    <reaction evidence="1">
        <text>RNA(n+1) + phosphate = RNA(n) + a ribonucleoside 5'-diphosphate</text>
        <dbReference type="Rhea" id="RHEA:22096"/>
        <dbReference type="Rhea" id="RHEA-COMP:14527"/>
        <dbReference type="Rhea" id="RHEA-COMP:17342"/>
        <dbReference type="ChEBI" id="CHEBI:43474"/>
        <dbReference type="ChEBI" id="CHEBI:57930"/>
        <dbReference type="ChEBI" id="CHEBI:140395"/>
        <dbReference type="EC" id="2.7.7.8"/>
    </reaction>
</comment>
<comment type="cofactor">
    <cofactor evidence="1">
        <name>Mg(2+)</name>
        <dbReference type="ChEBI" id="CHEBI:18420"/>
    </cofactor>
</comment>
<comment type="subcellular location">
    <subcellularLocation>
        <location evidence="1">Cytoplasm</location>
    </subcellularLocation>
</comment>
<comment type="similarity">
    <text evidence="1">Belongs to the polyribonucleotide nucleotidyltransferase family.</text>
</comment>